<feature type="chain" id="PRO_0000050873" description="Autophagy-related protein 18">
    <location>
        <begin position="1"/>
        <end position="400"/>
    </location>
</feature>
<feature type="repeat" description="WD 1">
    <location>
        <begin position="193"/>
        <end position="233"/>
    </location>
</feature>
<feature type="repeat" description="WD 2">
    <location>
        <begin position="238"/>
        <end position="277"/>
    </location>
</feature>
<feature type="short sequence motif" description="L/FRRG motif" evidence="2">
    <location>
        <begin position="234"/>
        <end position="238"/>
    </location>
</feature>
<evidence type="ECO:0000250" key="1"/>
<evidence type="ECO:0000250" key="2">
    <source>
        <dbReference type="UniProtKB" id="P43601"/>
    </source>
</evidence>
<evidence type="ECO:0000305" key="3"/>
<keyword id="KW-0072">Autophagy</keyword>
<keyword id="KW-0967">Endosome</keyword>
<keyword id="KW-0472">Membrane</keyword>
<keyword id="KW-0653">Protein transport</keyword>
<keyword id="KW-1185">Reference proteome</keyword>
<keyword id="KW-0677">Repeat</keyword>
<keyword id="KW-0813">Transport</keyword>
<keyword id="KW-0926">Vacuole</keyword>
<keyword id="KW-0853">WD repeat</keyword>
<organism>
    <name type="scientific">Yarrowia lipolytica (strain CLIB 122 / E 150)</name>
    <name type="common">Yeast</name>
    <name type="synonym">Candida lipolytica</name>
    <dbReference type="NCBI Taxonomy" id="284591"/>
    <lineage>
        <taxon>Eukaryota</taxon>
        <taxon>Fungi</taxon>
        <taxon>Dikarya</taxon>
        <taxon>Ascomycota</taxon>
        <taxon>Saccharomycotina</taxon>
        <taxon>Dipodascomycetes</taxon>
        <taxon>Dipodascales</taxon>
        <taxon>Dipodascales incertae sedis</taxon>
        <taxon>Yarrowia</taxon>
    </lineage>
</organism>
<comment type="function">
    <text evidence="1">The PI(3,5)P2 regulatory complex regulates both the synthesis and turnover of phosphatidylinositol 3,5-bisphosphate (PtdIns(3,5)P2). Necessary for proper vacuole morphology. Plays an important role in osmotically-induced vacuole fragmentation. Required for cytoplasm to vacuole transport (Cvt) vesicle formation, pexophagy and starvation-induced autophagy. Involved in correct ATG9 trafficking to the pre-autophagosomal structure. Might also be involved in premeiotic DNA replication (By similarity).</text>
</comment>
<comment type="subunit">
    <text evidence="1">Component of the PI(3,5)P2 regulatory complex.</text>
</comment>
<comment type="subcellular location">
    <subcellularLocation>
        <location evidence="1">Preautophagosomal structure membrane</location>
        <topology evidence="1">Peripheral membrane protein</topology>
    </subcellularLocation>
    <subcellularLocation>
        <location evidence="1">Vacuole membrane</location>
        <topology evidence="1">Peripheral membrane protein</topology>
    </subcellularLocation>
    <subcellularLocation>
        <location evidence="1">Endosome membrane</location>
        <topology evidence="1">Peripheral membrane protein</topology>
    </subcellularLocation>
</comment>
<comment type="domain">
    <text evidence="1">The N-terminus might form a beta-propeller domain involved in specific binding to phosphatidylinositol 3,5-bisphosphate (PIP2), leading to the association of the protein to the membrane.</text>
</comment>
<comment type="domain">
    <text evidence="2">The L/FRRG motif is essential for the cytoplasm to vacuole transport (Cvt) pathway, for the recruitment of ATG8 and ATG16 to the PAS in nutrient-rich medium, and for its recruitment to and dissociation from the PAS under starvation conditions.</text>
</comment>
<comment type="similarity">
    <text evidence="3">Belongs to the WD repeat PROPPIN family.</text>
</comment>
<name>ATG18_YARLI</name>
<gene>
    <name type="primary">ATG18</name>
    <name type="ordered locus">YALI0F27907g</name>
</gene>
<accession>Q6C044</accession>
<proteinExistence type="inferred from homology"/>
<protein>
    <recommendedName>
        <fullName>Autophagy-related protein 18</fullName>
    </recommendedName>
</protein>
<dbReference type="EMBL" id="CR382132">
    <property type="protein sequence ID" value="CAG78780.1"/>
    <property type="molecule type" value="Genomic_DNA"/>
</dbReference>
<dbReference type="RefSeq" id="XP_505968.1">
    <property type="nucleotide sequence ID" value="XM_505968.1"/>
</dbReference>
<dbReference type="SMR" id="Q6C044"/>
<dbReference type="FunCoup" id="Q6C044">
    <property type="interactions" value="579"/>
</dbReference>
<dbReference type="STRING" id="284591.Q6C044"/>
<dbReference type="EnsemblFungi" id="CAG78780">
    <property type="protein sequence ID" value="CAG78780"/>
    <property type="gene ID" value="YALI0_F27907g"/>
</dbReference>
<dbReference type="KEGG" id="yli:2908106"/>
<dbReference type="VEuPathDB" id="FungiDB:YALI0_F27907g"/>
<dbReference type="HOGENOM" id="CLU_025895_5_2_1"/>
<dbReference type="InParanoid" id="Q6C044"/>
<dbReference type="OMA" id="NIAILEM"/>
<dbReference type="OrthoDB" id="122366at4891"/>
<dbReference type="Proteomes" id="UP000001300">
    <property type="component" value="Chromosome F"/>
</dbReference>
<dbReference type="GO" id="GO:0005829">
    <property type="term" value="C:cytosol"/>
    <property type="evidence" value="ECO:0000318"/>
    <property type="project" value="GO_Central"/>
</dbReference>
<dbReference type="GO" id="GO:0010008">
    <property type="term" value="C:endosome membrane"/>
    <property type="evidence" value="ECO:0007669"/>
    <property type="project" value="UniProtKB-SubCell"/>
</dbReference>
<dbReference type="GO" id="GO:0000329">
    <property type="term" value="C:fungal-type vacuole membrane"/>
    <property type="evidence" value="ECO:0000318"/>
    <property type="project" value="GO_Central"/>
</dbReference>
<dbReference type="GO" id="GO:0034045">
    <property type="term" value="C:phagophore assembly site membrane"/>
    <property type="evidence" value="ECO:0000318"/>
    <property type="project" value="GO_Central"/>
</dbReference>
<dbReference type="GO" id="GO:0080025">
    <property type="term" value="F:phosphatidylinositol-3,5-bisphosphate binding"/>
    <property type="evidence" value="ECO:0000318"/>
    <property type="project" value="GO_Central"/>
</dbReference>
<dbReference type="GO" id="GO:0032266">
    <property type="term" value="F:phosphatidylinositol-3-phosphate binding"/>
    <property type="evidence" value="ECO:0000318"/>
    <property type="project" value="GO_Central"/>
</dbReference>
<dbReference type="GO" id="GO:0030674">
    <property type="term" value="F:protein-macromolecule adaptor activity"/>
    <property type="evidence" value="ECO:0000318"/>
    <property type="project" value="GO_Central"/>
</dbReference>
<dbReference type="GO" id="GO:0000422">
    <property type="term" value="P:autophagy of mitochondrion"/>
    <property type="evidence" value="ECO:0000318"/>
    <property type="project" value="GO_Central"/>
</dbReference>
<dbReference type="GO" id="GO:0061723">
    <property type="term" value="P:glycophagy"/>
    <property type="evidence" value="ECO:0000318"/>
    <property type="project" value="GO_Central"/>
</dbReference>
<dbReference type="GO" id="GO:0044804">
    <property type="term" value="P:nucleophagy"/>
    <property type="evidence" value="ECO:0000318"/>
    <property type="project" value="GO_Central"/>
</dbReference>
<dbReference type="GO" id="GO:0000425">
    <property type="term" value="P:pexophagy"/>
    <property type="evidence" value="ECO:0000318"/>
    <property type="project" value="GO_Central"/>
</dbReference>
<dbReference type="GO" id="GO:0034497">
    <property type="term" value="P:protein localization to phagophore assembly site"/>
    <property type="evidence" value="ECO:0000318"/>
    <property type="project" value="GO_Central"/>
</dbReference>
<dbReference type="GO" id="GO:0015031">
    <property type="term" value="P:protein transport"/>
    <property type="evidence" value="ECO:0007669"/>
    <property type="project" value="UniProtKB-KW"/>
</dbReference>
<dbReference type="FunFam" id="2.130.10.10:FF:000965">
    <property type="entry name" value="Autophagy-like protein 18 Atg18"/>
    <property type="match status" value="1"/>
</dbReference>
<dbReference type="Gene3D" id="2.130.10.10">
    <property type="entry name" value="YVTN repeat-like/Quinoprotein amine dehydrogenase"/>
    <property type="match status" value="1"/>
</dbReference>
<dbReference type="InterPro" id="IPR048720">
    <property type="entry name" value="PROPPIN"/>
</dbReference>
<dbReference type="InterPro" id="IPR015943">
    <property type="entry name" value="WD40/YVTN_repeat-like_dom_sf"/>
</dbReference>
<dbReference type="InterPro" id="IPR036322">
    <property type="entry name" value="WD40_repeat_dom_sf"/>
</dbReference>
<dbReference type="InterPro" id="IPR001680">
    <property type="entry name" value="WD40_rpt"/>
</dbReference>
<dbReference type="PANTHER" id="PTHR11227">
    <property type="entry name" value="WD-REPEAT PROTEIN INTERACTING WITH PHOSPHOINOSIDES WIPI -RELATED"/>
    <property type="match status" value="1"/>
</dbReference>
<dbReference type="Pfam" id="PF21032">
    <property type="entry name" value="PROPPIN"/>
    <property type="match status" value="1"/>
</dbReference>
<dbReference type="SMART" id="SM00320">
    <property type="entry name" value="WD40"/>
    <property type="match status" value="2"/>
</dbReference>
<dbReference type="SUPFAM" id="SSF50978">
    <property type="entry name" value="WD40 repeat-like"/>
    <property type="match status" value="1"/>
</dbReference>
<sequence length="400" mass="43565">MSDSINFVSFNQDYSCVSVGTPQGYKIYNCDPFGKCFSKADGGMGIVEMLFCTSLIAVVGMGDQPQNSPRRLKIVNTKRQSTICELTFPTAVLGVRLNRQRLVVLLQDQIYIYDISNMKLVHTIETSPNPGAVCALSASSSDNNNYLVYPFPAPSSTAFNPGENNINDSSPNRKGDVTIFDCNSLQPVNVVEAHKTPLACLSLNSDGTLLATASDKGTIIRVFSVPKAQKLYEFRRGTYPAQIFSINFNLASNLMAVSSATETVHIFQLEAGVSSTPEVPQDTELAIPTRTPQQKGMASVFRKSSRSLGKGLAGAVGSYLPQTFTGMWEPLRDFAFIKQTSLPGTRSVVSVTSTNPPQVLVVTLEGYFYQYTLDLEKGGECDLIRQYSLLDNVEGSLYGP</sequence>
<reference key="1">
    <citation type="journal article" date="2004" name="Nature">
        <title>Genome evolution in yeasts.</title>
        <authorList>
            <person name="Dujon B."/>
            <person name="Sherman D."/>
            <person name="Fischer G."/>
            <person name="Durrens P."/>
            <person name="Casaregola S."/>
            <person name="Lafontaine I."/>
            <person name="de Montigny J."/>
            <person name="Marck C."/>
            <person name="Neuveglise C."/>
            <person name="Talla E."/>
            <person name="Goffard N."/>
            <person name="Frangeul L."/>
            <person name="Aigle M."/>
            <person name="Anthouard V."/>
            <person name="Babour A."/>
            <person name="Barbe V."/>
            <person name="Barnay S."/>
            <person name="Blanchin S."/>
            <person name="Beckerich J.-M."/>
            <person name="Beyne E."/>
            <person name="Bleykasten C."/>
            <person name="Boisrame A."/>
            <person name="Boyer J."/>
            <person name="Cattolico L."/>
            <person name="Confanioleri F."/>
            <person name="de Daruvar A."/>
            <person name="Despons L."/>
            <person name="Fabre E."/>
            <person name="Fairhead C."/>
            <person name="Ferry-Dumazet H."/>
            <person name="Groppi A."/>
            <person name="Hantraye F."/>
            <person name="Hennequin C."/>
            <person name="Jauniaux N."/>
            <person name="Joyet P."/>
            <person name="Kachouri R."/>
            <person name="Kerrest A."/>
            <person name="Koszul R."/>
            <person name="Lemaire M."/>
            <person name="Lesur I."/>
            <person name="Ma L."/>
            <person name="Muller H."/>
            <person name="Nicaud J.-M."/>
            <person name="Nikolski M."/>
            <person name="Oztas S."/>
            <person name="Ozier-Kalogeropoulos O."/>
            <person name="Pellenz S."/>
            <person name="Potier S."/>
            <person name="Richard G.-F."/>
            <person name="Straub M.-L."/>
            <person name="Suleau A."/>
            <person name="Swennen D."/>
            <person name="Tekaia F."/>
            <person name="Wesolowski-Louvel M."/>
            <person name="Westhof E."/>
            <person name="Wirth B."/>
            <person name="Zeniou-Meyer M."/>
            <person name="Zivanovic Y."/>
            <person name="Bolotin-Fukuhara M."/>
            <person name="Thierry A."/>
            <person name="Bouchier C."/>
            <person name="Caudron B."/>
            <person name="Scarpelli C."/>
            <person name="Gaillardin C."/>
            <person name="Weissenbach J."/>
            <person name="Wincker P."/>
            <person name="Souciet J.-L."/>
        </authorList>
    </citation>
    <scope>NUCLEOTIDE SEQUENCE [LARGE SCALE GENOMIC DNA]</scope>
    <source>
        <strain>CLIB 122 / E 150</strain>
    </source>
</reference>